<name>XGPT_SHIF8</name>
<gene>
    <name evidence="1" type="primary">gpt</name>
    <name type="ordered locus">SFV_0292</name>
</gene>
<feature type="chain" id="PRO_1000070615" description="Xanthine-guanine phosphoribosyltransferase">
    <location>
        <begin position="1"/>
        <end position="152"/>
    </location>
</feature>
<feature type="binding site" evidence="1">
    <location>
        <begin position="37"/>
        <end position="38"/>
    </location>
    <ligand>
        <name>5-phospho-alpha-D-ribose 1-diphosphate</name>
        <dbReference type="ChEBI" id="CHEBI:58017"/>
    </ligand>
</feature>
<feature type="binding site" evidence="1">
    <location>
        <position position="69"/>
    </location>
    <ligand>
        <name>5-phospho-alpha-D-ribose 1-diphosphate</name>
        <dbReference type="ChEBI" id="CHEBI:58017"/>
    </ligand>
</feature>
<feature type="binding site" evidence="1">
    <location>
        <position position="69"/>
    </location>
    <ligand>
        <name>GMP</name>
        <dbReference type="ChEBI" id="CHEBI:58115"/>
    </ligand>
</feature>
<feature type="binding site" evidence="1">
    <location>
        <begin position="88"/>
        <end position="96"/>
    </location>
    <ligand>
        <name>5-phospho-alpha-D-ribose 1-diphosphate</name>
        <dbReference type="ChEBI" id="CHEBI:58017"/>
    </ligand>
</feature>
<feature type="binding site" evidence="1">
    <location>
        <position position="89"/>
    </location>
    <ligand>
        <name>Mg(2+)</name>
        <dbReference type="ChEBI" id="CHEBI:18420"/>
    </ligand>
</feature>
<feature type="binding site" evidence="1">
    <location>
        <begin position="92"/>
        <end position="96"/>
    </location>
    <ligand>
        <name>GMP</name>
        <dbReference type="ChEBI" id="CHEBI:58115"/>
    </ligand>
</feature>
<feature type="binding site" evidence="1">
    <location>
        <position position="92"/>
    </location>
    <ligand>
        <name>guanine</name>
        <dbReference type="ChEBI" id="CHEBI:16235"/>
    </ligand>
</feature>
<feature type="binding site" evidence="1">
    <location>
        <position position="92"/>
    </location>
    <ligand>
        <name>xanthine</name>
        <dbReference type="ChEBI" id="CHEBI:17712"/>
    </ligand>
</feature>
<feature type="binding site" evidence="1">
    <location>
        <begin position="134"/>
        <end position="135"/>
    </location>
    <ligand>
        <name>GMP</name>
        <dbReference type="ChEBI" id="CHEBI:58115"/>
    </ligand>
</feature>
<feature type="binding site" evidence="1">
    <location>
        <position position="135"/>
    </location>
    <ligand>
        <name>guanine</name>
        <dbReference type="ChEBI" id="CHEBI:16235"/>
    </ligand>
</feature>
<feature type="binding site" evidence="1">
    <location>
        <position position="135"/>
    </location>
    <ligand>
        <name>xanthine</name>
        <dbReference type="ChEBI" id="CHEBI:17712"/>
    </ligand>
</feature>
<organism>
    <name type="scientific">Shigella flexneri serotype 5b (strain 8401)</name>
    <dbReference type="NCBI Taxonomy" id="373384"/>
    <lineage>
        <taxon>Bacteria</taxon>
        <taxon>Pseudomonadati</taxon>
        <taxon>Pseudomonadota</taxon>
        <taxon>Gammaproteobacteria</taxon>
        <taxon>Enterobacterales</taxon>
        <taxon>Enterobacteriaceae</taxon>
        <taxon>Shigella</taxon>
    </lineage>
</organism>
<sequence>MSEKYIVTWDMLQIHARKLASRLMPSEQWKGIIAVSRGGLVPGALLARELGIRHVDTVCISSYDHDNQRELKVLKRAEGDGEGFIVIDDLVDTGGTAVAIREMYPKAHFVTIFAKPAGRPLVDDYVVDIPQDTWIEQPWDMGVVFVPPISGR</sequence>
<reference key="1">
    <citation type="journal article" date="2006" name="BMC Genomics">
        <title>Complete genome sequence of Shigella flexneri 5b and comparison with Shigella flexneri 2a.</title>
        <authorList>
            <person name="Nie H."/>
            <person name="Yang F."/>
            <person name="Zhang X."/>
            <person name="Yang J."/>
            <person name="Chen L."/>
            <person name="Wang J."/>
            <person name="Xiong Z."/>
            <person name="Peng J."/>
            <person name="Sun L."/>
            <person name="Dong J."/>
            <person name="Xue Y."/>
            <person name="Xu X."/>
            <person name="Chen S."/>
            <person name="Yao Z."/>
            <person name="Shen Y."/>
            <person name="Jin Q."/>
        </authorList>
    </citation>
    <scope>NUCLEOTIDE SEQUENCE [LARGE SCALE GENOMIC DNA]</scope>
    <source>
        <strain>8401</strain>
    </source>
</reference>
<evidence type="ECO:0000255" key="1">
    <source>
        <dbReference type="HAMAP-Rule" id="MF_01903"/>
    </source>
</evidence>
<accession>Q0T7Q9</accession>
<keyword id="KW-0997">Cell inner membrane</keyword>
<keyword id="KW-1003">Cell membrane</keyword>
<keyword id="KW-0328">Glycosyltransferase</keyword>
<keyword id="KW-0460">Magnesium</keyword>
<keyword id="KW-0472">Membrane</keyword>
<keyword id="KW-0479">Metal-binding</keyword>
<keyword id="KW-0660">Purine salvage</keyword>
<keyword id="KW-0808">Transferase</keyword>
<comment type="function">
    <text evidence="1">Purine salvage pathway enzyme that catalyzes the transfer of the ribosyl-5-phosphate group from 5-phospho-alpha-D-ribose 1-diphosphate (PRPP) to the N9 position of the 6-oxopurines guanine and xanthine to form the corresponding ribonucleotides GMP (guanosine 5'-monophosphate) and XMP (xanthosine 5'-monophosphate), with the release of PPi. To a lesser extent, also acts on hypoxanthine.</text>
</comment>
<comment type="catalytic activity">
    <reaction evidence="1">
        <text>GMP + diphosphate = guanine + 5-phospho-alpha-D-ribose 1-diphosphate</text>
        <dbReference type="Rhea" id="RHEA:25424"/>
        <dbReference type="ChEBI" id="CHEBI:16235"/>
        <dbReference type="ChEBI" id="CHEBI:33019"/>
        <dbReference type="ChEBI" id="CHEBI:58017"/>
        <dbReference type="ChEBI" id="CHEBI:58115"/>
    </reaction>
    <physiologicalReaction direction="right-to-left" evidence="1">
        <dbReference type="Rhea" id="RHEA:25426"/>
    </physiologicalReaction>
</comment>
<comment type="catalytic activity">
    <reaction evidence="1">
        <text>XMP + diphosphate = xanthine + 5-phospho-alpha-D-ribose 1-diphosphate</text>
        <dbReference type="Rhea" id="RHEA:10800"/>
        <dbReference type="ChEBI" id="CHEBI:17712"/>
        <dbReference type="ChEBI" id="CHEBI:33019"/>
        <dbReference type="ChEBI" id="CHEBI:57464"/>
        <dbReference type="ChEBI" id="CHEBI:58017"/>
        <dbReference type="EC" id="2.4.2.22"/>
    </reaction>
    <physiologicalReaction direction="right-to-left" evidence="1">
        <dbReference type="Rhea" id="RHEA:10802"/>
    </physiologicalReaction>
</comment>
<comment type="catalytic activity">
    <reaction evidence="1">
        <text>IMP + diphosphate = hypoxanthine + 5-phospho-alpha-D-ribose 1-diphosphate</text>
        <dbReference type="Rhea" id="RHEA:17973"/>
        <dbReference type="ChEBI" id="CHEBI:17368"/>
        <dbReference type="ChEBI" id="CHEBI:33019"/>
        <dbReference type="ChEBI" id="CHEBI:58017"/>
        <dbReference type="ChEBI" id="CHEBI:58053"/>
    </reaction>
    <physiologicalReaction direction="right-to-left" evidence="1">
        <dbReference type="Rhea" id="RHEA:17975"/>
    </physiologicalReaction>
</comment>
<comment type="cofactor">
    <cofactor evidence="1">
        <name>Mg(2+)</name>
        <dbReference type="ChEBI" id="CHEBI:18420"/>
    </cofactor>
</comment>
<comment type="pathway">
    <text evidence="1">Purine metabolism; GMP biosynthesis via salvage pathway; GMP from guanine: step 1/1.</text>
</comment>
<comment type="pathway">
    <text evidence="1">Purine metabolism; XMP biosynthesis via salvage pathway; XMP from xanthine: step 1/1.</text>
</comment>
<comment type="subunit">
    <text evidence="1">Homotetramer.</text>
</comment>
<comment type="subcellular location">
    <subcellularLocation>
        <location evidence="1">Cell inner membrane</location>
        <topology evidence="1">Peripheral membrane protein</topology>
    </subcellularLocation>
</comment>
<comment type="similarity">
    <text evidence="1">Belongs to the purine/pyrimidine phosphoribosyltransferase family. XGPT subfamily.</text>
</comment>
<proteinExistence type="inferred from homology"/>
<protein>
    <recommendedName>
        <fullName evidence="1">Xanthine-guanine phosphoribosyltransferase</fullName>
        <shortName evidence="1">XGPRT</shortName>
        <ecNumber evidence="1">2.4.2.-</ecNumber>
        <ecNumber evidence="1">2.4.2.22</ecNumber>
    </recommendedName>
    <alternativeName>
        <fullName evidence="1">Xanthine phosphoribosyltransferase</fullName>
    </alternativeName>
</protein>
<dbReference type="EC" id="2.4.2.-" evidence="1"/>
<dbReference type="EC" id="2.4.2.22" evidence="1"/>
<dbReference type="EMBL" id="CP000266">
    <property type="protein sequence ID" value="ABF02567.1"/>
    <property type="molecule type" value="Genomic_DNA"/>
</dbReference>
<dbReference type="RefSeq" id="WP_001291990.1">
    <property type="nucleotide sequence ID" value="NC_008258.1"/>
</dbReference>
<dbReference type="SMR" id="Q0T7Q9"/>
<dbReference type="GeneID" id="93777155"/>
<dbReference type="KEGG" id="sfv:SFV_0292"/>
<dbReference type="HOGENOM" id="CLU_080904_3_0_6"/>
<dbReference type="UniPathway" id="UPA00602">
    <property type="reaction ID" value="UER00658"/>
</dbReference>
<dbReference type="UniPathway" id="UPA00909">
    <property type="reaction ID" value="UER00887"/>
</dbReference>
<dbReference type="Proteomes" id="UP000000659">
    <property type="component" value="Chromosome"/>
</dbReference>
<dbReference type="GO" id="GO:0005829">
    <property type="term" value="C:cytosol"/>
    <property type="evidence" value="ECO:0007669"/>
    <property type="project" value="TreeGrafter"/>
</dbReference>
<dbReference type="GO" id="GO:0005886">
    <property type="term" value="C:plasma membrane"/>
    <property type="evidence" value="ECO:0007669"/>
    <property type="project" value="UniProtKB-SubCell"/>
</dbReference>
<dbReference type="GO" id="GO:0052657">
    <property type="term" value="F:guanine phosphoribosyltransferase activity"/>
    <property type="evidence" value="ECO:0007669"/>
    <property type="project" value="RHEA"/>
</dbReference>
<dbReference type="GO" id="GO:0004422">
    <property type="term" value="F:hypoxanthine phosphoribosyltransferase activity"/>
    <property type="evidence" value="ECO:0007669"/>
    <property type="project" value="TreeGrafter"/>
</dbReference>
<dbReference type="GO" id="GO:0000287">
    <property type="term" value="F:magnesium ion binding"/>
    <property type="evidence" value="ECO:0007669"/>
    <property type="project" value="UniProtKB-UniRule"/>
</dbReference>
<dbReference type="GO" id="GO:0000310">
    <property type="term" value="F:xanthine phosphoribosyltransferase activity"/>
    <property type="evidence" value="ECO:0007669"/>
    <property type="project" value="UniProtKB-UniRule"/>
</dbReference>
<dbReference type="GO" id="GO:0032263">
    <property type="term" value="P:GMP salvage"/>
    <property type="evidence" value="ECO:0007669"/>
    <property type="project" value="UniProtKB-UniRule"/>
</dbReference>
<dbReference type="GO" id="GO:0032264">
    <property type="term" value="P:IMP salvage"/>
    <property type="evidence" value="ECO:0007669"/>
    <property type="project" value="TreeGrafter"/>
</dbReference>
<dbReference type="GO" id="GO:0006166">
    <property type="term" value="P:purine ribonucleoside salvage"/>
    <property type="evidence" value="ECO:0007669"/>
    <property type="project" value="UniProtKB-KW"/>
</dbReference>
<dbReference type="GO" id="GO:0032265">
    <property type="term" value="P:XMP salvage"/>
    <property type="evidence" value="ECO:0007669"/>
    <property type="project" value="UniProtKB-UniRule"/>
</dbReference>
<dbReference type="CDD" id="cd06223">
    <property type="entry name" value="PRTases_typeI"/>
    <property type="match status" value="1"/>
</dbReference>
<dbReference type="FunFam" id="3.40.50.2020:FF:000009">
    <property type="entry name" value="Xanthine phosphoribosyltransferase"/>
    <property type="match status" value="1"/>
</dbReference>
<dbReference type="Gene3D" id="3.40.50.2020">
    <property type="match status" value="1"/>
</dbReference>
<dbReference type="HAMAP" id="MF_01903">
    <property type="entry name" value="XGPRT"/>
    <property type="match status" value="1"/>
</dbReference>
<dbReference type="InterPro" id="IPR000836">
    <property type="entry name" value="PRibTrfase_dom"/>
</dbReference>
<dbReference type="InterPro" id="IPR029057">
    <property type="entry name" value="PRTase-like"/>
</dbReference>
<dbReference type="InterPro" id="IPR023747">
    <property type="entry name" value="Xanthine_Guanine_PRibTrfase"/>
</dbReference>
<dbReference type="NCBIfam" id="NF006613">
    <property type="entry name" value="PRK09177.1"/>
    <property type="match status" value="1"/>
</dbReference>
<dbReference type="PANTHER" id="PTHR39563">
    <property type="entry name" value="XANTHINE PHOSPHORIBOSYLTRANSFERASE"/>
    <property type="match status" value="1"/>
</dbReference>
<dbReference type="PANTHER" id="PTHR39563:SF1">
    <property type="entry name" value="XANTHINE-GUANINE PHOSPHORIBOSYLTRANSFERASE"/>
    <property type="match status" value="1"/>
</dbReference>
<dbReference type="Pfam" id="PF00156">
    <property type="entry name" value="Pribosyltran"/>
    <property type="match status" value="1"/>
</dbReference>
<dbReference type="SUPFAM" id="SSF53271">
    <property type="entry name" value="PRTase-like"/>
    <property type="match status" value="1"/>
</dbReference>
<dbReference type="PROSITE" id="PS00103">
    <property type="entry name" value="PUR_PYR_PR_TRANSFER"/>
    <property type="match status" value="1"/>
</dbReference>